<keyword id="KW-0488">Methylation</keyword>
<keyword id="KW-0687">Ribonucleoprotein</keyword>
<keyword id="KW-0689">Ribosomal protein</keyword>
<keyword id="KW-0694">RNA-binding</keyword>
<keyword id="KW-0699">rRNA-binding</keyword>
<dbReference type="EMBL" id="CP001393">
    <property type="protein sequence ID" value="ACM60629.1"/>
    <property type="molecule type" value="Genomic_DNA"/>
</dbReference>
<dbReference type="RefSeq" id="WP_013430156.1">
    <property type="nucleotide sequence ID" value="NC_012034.1"/>
</dbReference>
<dbReference type="SMR" id="B9MJX1"/>
<dbReference type="STRING" id="521460.Athe_1531"/>
<dbReference type="GeneID" id="31772881"/>
<dbReference type="KEGG" id="ate:Athe_1531"/>
<dbReference type="eggNOG" id="COG0080">
    <property type="taxonomic scope" value="Bacteria"/>
</dbReference>
<dbReference type="HOGENOM" id="CLU_074237_2_1_9"/>
<dbReference type="Proteomes" id="UP000007723">
    <property type="component" value="Chromosome"/>
</dbReference>
<dbReference type="GO" id="GO:0022625">
    <property type="term" value="C:cytosolic large ribosomal subunit"/>
    <property type="evidence" value="ECO:0007669"/>
    <property type="project" value="TreeGrafter"/>
</dbReference>
<dbReference type="GO" id="GO:0070180">
    <property type="term" value="F:large ribosomal subunit rRNA binding"/>
    <property type="evidence" value="ECO:0007669"/>
    <property type="project" value="UniProtKB-UniRule"/>
</dbReference>
<dbReference type="GO" id="GO:0003735">
    <property type="term" value="F:structural constituent of ribosome"/>
    <property type="evidence" value="ECO:0007669"/>
    <property type="project" value="InterPro"/>
</dbReference>
<dbReference type="GO" id="GO:0006412">
    <property type="term" value="P:translation"/>
    <property type="evidence" value="ECO:0007669"/>
    <property type="project" value="UniProtKB-UniRule"/>
</dbReference>
<dbReference type="CDD" id="cd00349">
    <property type="entry name" value="Ribosomal_L11"/>
    <property type="match status" value="1"/>
</dbReference>
<dbReference type="FunFam" id="1.10.10.250:FF:000001">
    <property type="entry name" value="50S ribosomal protein L11"/>
    <property type="match status" value="1"/>
</dbReference>
<dbReference type="FunFam" id="3.30.1550.10:FF:000001">
    <property type="entry name" value="50S ribosomal protein L11"/>
    <property type="match status" value="1"/>
</dbReference>
<dbReference type="Gene3D" id="1.10.10.250">
    <property type="entry name" value="Ribosomal protein L11, C-terminal domain"/>
    <property type="match status" value="1"/>
</dbReference>
<dbReference type="Gene3D" id="3.30.1550.10">
    <property type="entry name" value="Ribosomal protein L11/L12, N-terminal domain"/>
    <property type="match status" value="1"/>
</dbReference>
<dbReference type="HAMAP" id="MF_00736">
    <property type="entry name" value="Ribosomal_uL11"/>
    <property type="match status" value="1"/>
</dbReference>
<dbReference type="InterPro" id="IPR000911">
    <property type="entry name" value="Ribosomal_uL11"/>
</dbReference>
<dbReference type="InterPro" id="IPR006519">
    <property type="entry name" value="Ribosomal_uL11_bac-typ"/>
</dbReference>
<dbReference type="InterPro" id="IPR020783">
    <property type="entry name" value="Ribosomal_uL11_C"/>
</dbReference>
<dbReference type="InterPro" id="IPR036769">
    <property type="entry name" value="Ribosomal_uL11_C_sf"/>
</dbReference>
<dbReference type="InterPro" id="IPR020785">
    <property type="entry name" value="Ribosomal_uL11_CS"/>
</dbReference>
<dbReference type="InterPro" id="IPR020784">
    <property type="entry name" value="Ribosomal_uL11_N"/>
</dbReference>
<dbReference type="InterPro" id="IPR036796">
    <property type="entry name" value="Ribosomal_uL11_N_sf"/>
</dbReference>
<dbReference type="NCBIfam" id="TIGR01632">
    <property type="entry name" value="L11_bact"/>
    <property type="match status" value="1"/>
</dbReference>
<dbReference type="PANTHER" id="PTHR11661">
    <property type="entry name" value="60S RIBOSOMAL PROTEIN L12"/>
    <property type="match status" value="1"/>
</dbReference>
<dbReference type="PANTHER" id="PTHR11661:SF1">
    <property type="entry name" value="LARGE RIBOSOMAL SUBUNIT PROTEIN UL11M"/>
    <property type="match status" value="1"/>
</dbReference>
<dbReference type="Pfam" id="PF00298">
    <property type="entry name" value="Ribosomal_L11"/>
    <property type="match status" value="1"/>
</dbReference>
<dbReference type="Pfam" id="PF03946">
    <property type="entry name" value="Ribosomal_L11_N"/>
    <property type="match status" value="1"/>
</dbReference>
<dbReference type="SMART" id="SM00649">
    <property type="entry name" value="RL11"/>
    <property type="match status" value="1"/>
</dbReference>
<dbReference type="SUPFAM" id="SSF54747">
    <property type="entry name" value="Ribosomal L11/L12e N-terminal domain"/>
    <property type="match status" value="1"/>
</dbReference>
<dbReference type="SUPFAM" id="SSF46906">
    <property type="entry name" value="Ribosomal protein L11, C-terminal domain"/>
    <property type="match status" value="1"/>
</dbReference>
<dbReference type="PROSITE" id="PS00359">
    <property type="entry name" value="RIBOSOMAL_L11"/>
    <property type="match status" value="1"/>
</dbReference>
<name>RL11_CALBD</name>
<protein>
    <recommendedName>
        <fullName evidence="1">Large ribosomal subunit protein uL11</fullName>
    </recommendedName>
    <alternativeName>
        <fullName evidence="2">50S ribosomal protein L11</fullName>
    </alternativeName>
</protein>
<gene>
    <name evidence="1" type="primary">rplK</name>
    <name type="ordered locus">Athe_1531</name>
</gene>
<sequence>MAKKVLTQIKLQIPAGKATPAPPVGPALGQHGVNIMQFCKEFNERTAKDAGLIIPVVITVYSDRSFTFITKTPPASVLLKKAAGIESGSPKPNKQKVATLKRDVIKKIAEQKMPDLTAASLEAAMRTIEGTAKSMGIVVED</sequence>
<reference key="1">
    <citation type="submission" date="2009-01" db="EMBL/GenBank/DDBJ databases">
        <title>Complete sequence of chromosome of Caldicellulosiruptor becscii DSM 6725.</title>
        <authorList>
            <person name="Lucas S."/>
            <person name="Copeland A."/>
            <person name="Lapidus A."/>
            <person name="Glavina del Rio T."/>
            <person name="Tice H."/>
            <person name="Bruce D."/>
            <person name="Goodwin L."/>
            <person name="Pitluck S."/>
            <person name="Sims D."/>
            <person name="Meincke L."/>
            <person name="Brettin T."/>
            <person name="Detter J.C."/>
            <person name="Han C."/>
            <person name="Larimer F."/>
            <person name="Land M."/>
            <person name="Hauser L."/>
            <person name="Kyrpides N."/>
            <person name="Ovchinnikova G."/>
            <person name="Kataeva I."/>
            <person name="Adams M.W.W."/>
        </authorList>
    </citation>
    <scope>NUCLEOTIDE SEQUENCE [LARGE SCALE GENOMIC DNA]</scope>
    <source>
        <strain>ATCC BAA-1888 / DSM 6725 / KCTC 15123 / Z-1320</strain>
    </source>
</reference>
<feature type="chain" id="PRO_1000195578" description="Large ribosomal subunit protein uL11">
    <location>
        <begin position="1"/>
        <end position="141"/>
    </location>
</feature>
<comment type="function">
    <text evidence="1">Forms part of the ribosomal stalk which helps the ribosome interact with GTP-bound translation factors.</text>
</comment>
<comment type="subunit">
    <text evidence="1">Part of the ribosomal stalk of the 50S ribosomal subunit. Interacts with L10 and the large rRNA to form the base of the stalk. L10 forms an elongated spine to which L12 dimers bind in a sequential fashion forming a multimeric L10(L12)X complex.</text>
</comment>
<comment type="PTM">
    <text evidence="1">One or more lysine residues are methylated.</text>
</comment>
<comment type="similarity">
    <text evidence="1">Belongs to the universal ribosomal protein uL11 family.</text>
</comment>
<proteinExistence type="inferred from homology"/>
<organism>
    <name type="scientific">Caldicellulosiruptor bescii (strain ATCC BAA-1888 / DSM 6725 / KCTC 15123 / Z-1320)</name>
    <name type="common">Anaerocellum thermophilum</name>
    <dbReference type="NCBI Taxonomy" id="521460"/>
    <lineage>
        <taxon>Bacteria</taxon>
        <taxon>Bacillati</taxon>
        <taxon>Bacillota</taxon>
        <taxon>Bacillota incertae sedis</taxon>
        <taxon>Caldicellulosiruptorales</taxon>
        <taxon>Caldicellulosiruptoraceae</taxon>
        <taxon>Caldicellulosiruptor</taxon>
    </lineage>
</organism>
<accession>B9MJX1</accession>
<evidence type="ECO:0000255" key="1">
    <source>
        <dbReference type="HAMAP-Rule" id="MF_00736"/>
    </source>
</evidence>
<evidence type="ECO:0000305" key="2"/>